<organism>
    <name type="scientific">Desulfosudis oleivorans (strain DSM 6200 / JCM 39069 / Hxd3)</name>
    <name type="common">Desulfococcus oleovorans</name>
    <dbReference type="NCBI Taxonomy" id="96561"/>
    <lineage>
        <taxon>Bacteria</taxon>
        <taxon>Pseudomonadati</taxon>
        <taxon>Thermodesulfobacteriota</taxon>
        <taxon>Desulfobacteria</taxon>
        <taxon>Desulfobacterales</taxon>
        <taxon>Desulfosudaceae</taxon>
        <taxon>Desulfosudis</taxon>
    </lineage>
</organism>
<proteinExistence type="inferred from homology"/>
<sequence length="312" mass="34505">MSFRHTSVMPDQAVALLNCEKGKIVADCTLGGGGHAVRIAEQILPEGLLIGIDKDPAALAHAKQALSVFGERVLYVRGNFADFSEILSSLDIPAVDGVLLDLGLSFYQIDGSGRGFSFRKDEPLDMRMDPDQSLTAADLVNQSAEADLVRIFREFGEERYASRIARRIVEARRSAPVTTSGQLARIVTDAYPAKERHTAKIDPATRVFMALRIAVNTELENLERFLDTVIDRIKPGGRICVLSFHSLEDRMVKRRMKLWEKACVCPPGLPVCSCSKQRECRIVTRKALVPTAEEVQANPMARSVRLRAAEKV</sequence>
<protein>
    <recommendedName>
        <fullName evidence="1">Ribosomal RNA small subunit methyltransferase H</fullName>
        <ecNumber evidence="1">2.1.1.199</ecNumber>
    </recommendedName>
    <alternativeName>
        <fullName evidence="1">16S rRNA m(4)C1402 methyltransferase</fullName>
    </alternativeName>
    <alternativeName>
        <fullName evidence="1">rRNA (cytosine-N(4)-)-methyltransferase RsmH</fullName>
    </alternativeName>
</protein>
<accession>A8ZXX1</accession>
<feature type="chain" id="PRO_0000386848" description="Ribosomal RNA small subunit methyltransferase H">
    <location>
        <begin position="1"/>
        <end position="312"/>
    </location>
</feature>
<feature type="binding site" evidence="1">
    <location>
        <begin position="33"/>
        <end position="35"/>
    </location>
    <ligand>
        <name>S-adenosyl-L-methionine</name>
        <dbReference type="ChEBI" id="CHEBI:59789"/>
    </ligand>
</feature>
<feature type="binding site" evidence="1">
    <location>
        <position position="53"/>
    </location>
    <ligand>
        <name>S-adenosyl-L-methionine</name>
        <dbReference type="ChEBI" id="CHEBI:59789"/>
    </ligand>
</feature>
<feature type="binding site" evidence="1">
    <location>
        <position position="80"/>
    </location>
    <ligand>
        <name>S-adenosyl-L-methionine</name>
        <dbReference type="ChEBI" id="CHEBI:59789"/>
    </ligand>
</feature>
<feature type="binding site" evidence="1">
    <location>
        <position position="101"/>
    </location>
    <ligand>
        <name>S-adenosyl-L-methionine</name>
        <dbReference type="ChEBI" id="CHEBI:59789"/>
    </ligand>
</feature>
<feature type="binding site" evidence="1">
    <location>
        <position position="108"/>
    </location>
    <ligand>
        <name>S-adenosyl-L-methionine</name>
        <dbReference type="ChEBI" id="CHEBI:59789"/>
    </ligand>
</feature>
<evidence type="ECO:0000255" key="1">
    <source>
        <dbReference type="HAMAP-Rule" id="MF_01007"/>
    </source>
</evidence>
<dbReference type="EC" id="2.1.1.199" evidence="1"/>
<dbReference type="EMBL" id="CP000859">
    <property type="protein sequence ID" value="ABW68598.1"/>
    <property type="molecule type" value="Genomic_DNA"/>
</dbReference>
<dbReference type="RefSeq" id="WP_012176209.1">
    <property type="nucleotide sequence ID" value="NC_009943.1"/>
</dbReference>
<dbReference type="SMR" id="A8ZXX1"/>
<dbReference type="STRING" id="96561.Dole_2795"/>
<dbReference type="KEGG" id="dol:Dole_2795"/>
<dbReference type="eggNOG" id="COG0275">
    <property type="taxonomic scope" value="Bacteria"/>
</dbReference>
<dbReference type="HOGENOM" id="CLU_038422_3_0_7"/>
<dbReference type="OrthoDB" id="9806637at2"/>
<dbReference type="Proteomes" id="UP000008561">
    <property type="component" value="Chromosome"/>
</dbReference>
<dbReference type="GO" id="GO:0005737">
    <property type="term" value="C:cytoplasm"/>
    <property type="evidence" value="ECO:0007669"/>
    <property type="project" value="UniProtKB-SubCell"/>
</dbReference>
<dbReference type="GO" id="GO:0071424">
    <property type="term" value="F:rRNA (cytosine-N4-)-methyltransferase activity"/>
    <property type="evidence" value="ECO:0007669"/>
    <property type="project" value="UniProtKB-UniRule"/>
</dbReference>
<dbReference type="GO" id="GO:0070475">
    <property type="term" value="P:rRNA base methylation"/>
    <property type="evidence" value="ECO:0007669"/>
    <property type="project" value="UniProtKB-UniRule"/>
</dbReference>
<dbReference type="Gene3D" id="1.10.150.170">
    <property type="entry name" value="Putative methyltransferase TM0872, insert domain"/>
    <property type="match status" value="1"/>
</dbReference>
<dbReference type="Gene3D" id="3.40.50.150">
    <property type="entry name" value="Vaccinia Virus protein VP39"/>
    <property type="match status" value="1"/>
</dbReference>
<dbReference type="HAMAP" id="MF_01007">
    <property type="entry name" value="16SrRNA_methyltr_H"/>
    <property type="match status" value="1"/>
</dbReference>
<dbReference type="InterPro" id="IPR002903">
    <property type="entry name" value="RsmH"/>
</dbReference>
<dbReference type="InterPro" id="IPR023397">
    <property type="entry name" value="SAM-dep_MeTrfase_MraW_recog"/>
</dbReference>
<dbReference type="InterPro" id="IPR029063">
    <property type="entry name" value="SAM-dependent_MTases_sf"/>
</dbReference>
<dbReference type="NCBIfam" id="TIGR00006">
    <property type="entry name" value="16S rRNA (cytosine(1402)-N(4))-methyltransferase RsmH"/>
    <property type="match status" value="1"/>
</dbReference>
<dbReference type="PANTHER" id="PTHR11265:SF0">
    <property type="entry name" value="12S RRNA N4-METHYLCYTIDINE METHYLTRANSFERASE"/>
    <property type="match status" value="1"/>
</dbReference>
<dbReference type="PANTHER" id="PTHR11265">
    <property type="entry name" value="S-ADENOSYL-METHYLTRANSFERASE MRAW"/>
    <property type="match status" value="1"/>
</dbReference>
<dbReference type="Pfam" id="PF01795">
    <property type="entry name" value="Methyltransf_5"/>
    <property type="match status" value="1"/>
</dbReference>
<dbReference type="PIRSF" id="PIRSF004486">
    <property type="entry name" value="MraW"/>
    <property type="match status" value="1"/>
</dbReference>
<dbReference type="SUPFAM" id="SSF81799">
    <property type="entry name" value="Putative methyltransferase TM0872, insert domain"/>
    <property type="match status" value="1"/>
</dbReference>
<dbReference type="SUPFAM" id="SSF53335">
    <property type="entry name" value="S-adenosyl-L-methionine-dependent methyltransferases"/>
    <property type="match status" value="1"/>
</dbReference>
<comment type="function">
    <text evidence="1">Specifically methylates the N4 position of cytidine in position 1402 (C1402) of 16S rRNA.</text>
</comment>
<comment type="catalytic activity">
    <reaction evidence="1">
        <text>cytidine(1402) in 16S rRNA + S-adenosyl-L-methionine = N(4)-methylcytidine(1402) in 16S rRNA + S-adenosyl-L-homocysteine + H(+)</text>
        <dbReference type="Rhea" id="RHEA:42928"/>
        <dbReference type="Rhea" id="RHEA-COMP:10286"/>
        <dbReference type="Rhea" id="RHEA-COMP:10287"/>
        <dbReference type="ChEBI" id="CHEBI:15378"/>
        <dbReference type="ChEBI" id="CHEBI:57856"/>
        <dbReference type="ChEBI" id="CHEBI:59789"/>
        <dbReference type="ChEBI" id="CHEBI:74506"/>
        <dbReference type="ChEBI" id="CHEBI:82748"/>
        <dbReference type="EC" id="2.1.1.199"/>
    </reaction>
</comment>
<comment type="subcellular location">
    <subcellularLocation>
        <location evidence="1">Cytoplasm</location>
    </subcellularLocation>
</comment>
<comment type="similarity">
    <text evidence="1">Belongs to the methyltransferase superfamily. RsmH family.</text>
</comment>
<name>RSMH_DESOH</name>
<reference key="1">
    <citation type="submission" date="2007-10" db="EMBL/GenBank/DDBJ databases">
        <title>Complete sequence of Desulfococcus oleovorans Hxd3.</title>
        <authorList>
            <consortium name="US DOE Joint Genome Institute"/>
            <person name="Copeland A."/>
            <person name="Lucas S."/>
            <person name="Lapidus A."/>
            <person name="Barry K."/>
            <person name="Glavina del Rio T."/>
            <person name="Dalin E."/>
            <person name="Tice H."/>
            <person name="Pitluck S."/>
            <person name="Kiss H."/>
            <person name="Brettin T."/>
            <person name="Bruce D."/>
            <person name="Detter J.C."/>
            <person name="Han C."/>
            <person name="Schmutz J."/>
            <person name="Larimer F."/>
            <person name="Land M."/>
            <person name="Hauser L."/>
            <person name="Kyrpides N."/>
            <person name="Kim E."/>
            <person name="Wawrik B."/>
            <person name="Richardson P."/>
        </authorList>
    </citation>
    <scope>NUCLEOTIDE SEQUENCE [LARGE SCALE GENOMIC DNA]</scope>
    <source>
        <strain>DSM 6200 / JCM 39069 / Hxd3</strain>
    </source>
</reference>
<keyword id="KW-0963">Cytoplasm</keyword>
<keyword id="KW-0489">Methyltransferase</keyword>
<keyword id="KW-1185">Reference proteome</keyword>
<keyword id="KW-0698">rRNA processing</keyword>
<keyword id="KW-0949">S-adenosyl-L-methionine</keyword>
<keyword id="KW-0808">Transferase</keyword>
<gene>
    <name evidence="1" type="primary">rsmH</name>
    <name type="synonym">mraW</name>
    <name type="ordered locus">Dole_2795</name>
</gene>